<dbReference type="EC" id="4.2.3.3" evidence="1"/>
<dbReference type="EMBL" id="CP000880">
    <property type="protein sequence ID" value="ABX21816.1"/>
    <property type="molecule type" value="Genomic_DNA"/>
</dbReference>
<dbReference type="SMR" id="A9MHS6"/>
<dbReference type="STRING" id="41514.SARI_01934"/>
<dbReference type="KEGG" id="ses:SARI_01934"/>
<dbReference type="HOGENOM" id="CLU_120420_0_1_6"/>
<dbReference type="Proteomes" id="UP000002084">
    <property type="component" value="Chromosome"/>
</dbReference>
<dbReference type="GO" id="GO:0005829">
    <property type="term" value="C:cytosol"/>
    <property type="evidence" value="ECO:0007669"/>
    <property type="project" value="TreeGrafter"/>
</dbReference>
<dbReference type="GO" id="GO:0008929">
    <property type="term" value="F:methylglyoxal synthase activity"/>
    <property type="evidence" value="ECO:0007669"/>
    <property type="project" value="UniProtKB-UniRule"/>
</dbReference>
<dbReference type="GO" id="GO:0019242">
    <property type="term" value="P:methylglyoxal biosynthetic process"/>
    <property type="evidence" value="ECO:0007669"/>
    <property type="project" value="UniProtKB-UniRule"/>
</dbReference>
<dbReference type="CDD" id="cd01422">
    <property type="entry name" value="MGS"/>
    <property type="match status" value="1"/>
</dbReference>
<dbReference type="FunFam" id="3.40.50.1380:FF:000002">
    <property type="entry name" value="Methylglyoxal synthase"/>
    <property type="match status" value="1"/>
</dbReference>
<dbReference type="Gene3D" id="3.40.50.1380">
    <property type="entry name" value="Methylglyoxal synthase-like domain"/>
    <property type="match status" value="1"/>
</dbReference>
<dbReference type="HAMAP" id="MF_00549">
    <property type="entry name" value="Methylglyoxal_synth"/>
    <property type="match status" value="1"/>
</dbReference>
<dbReference type="InterPro" id="IPR004363">
    <property type="entry name" value="Methylgl_synth"/>
</dbReference>
<dbReference type="InterPro" id="IPR018148">
    <property type="entry name" value="Methylglyoxal_synth_AS"/>
</dbReference>
<dbReference type="InterPro" id="IPR011607">
    <property type="entry name" value="MGS-like_dom"/>
</dbReference>
<dbReference type="InterPro" id="IPR036914">
    <property type="entry name" value="MGS-like_dom_sf"/>
</dbReference>
<dbReference type="NCBIfam" id="TIGR00160">
    <property type="entry name" value="MGSA"/>
    <property type="match status" value="1"/>
</dbReference>
<dbReference type="NCBIfam" id="NF003559">
    <property type="entry name" value="PRK05234.1"/>
    <property type="match status" value="1"/>
</dbReference>
<dbReference type="PANTHER" id="PTHR30492">
    <property type="entry name" value="METHYLGLYOXAL SYNTHASE"/>
    <property type="match status" value="1"/>
</dbReference>
<dbReference type="PANTHER" id="PTHR30492:SF0">
    <property type="entry name" value="METHYLGLYOXAL SYNTHASE"/>
    <property type="match status" value="1"/>
</dbReference>
<dbReference type="Pfam" id="PF02142">
    <property type="entry name" value="MGS"/>
    <property type="match status" value="1"/>
</dbReference>
<dbReference type="PIRSF" id="PIRSF006614">
    <property type="entry name" value="Methylglyox_syn"/>
    <property type="match status" value="1"/>
</dbReference>
<dbReference type="SMART" id="SM00851">
    <property type="entry name" value="MGS"/>
    <property type="match status" value="1"/>
</dbReference>
<dbReference type="SUPFAM" id="SSF52335">
    <property type="entry name" value="Methylglyoxal synthase-like"/>
    <property type="match status" value="1"/>
</dbReference>
<dbReference type="PROSITE" id="PS01335">
    <property type="entry name" value="METHYLGLYOXAL_SYNTH"/>
    <property type="match status" value="1"/>
</dbReference>
<dbReference type="PROSITE" id="PS51855">
    <property type="entry name" value="MGS"/>
    <property type="match status" value="1"/>
</dbReference>
<feature type="chain" id="PRO_1000081957" description="Methylglyoxal synthase">
    <location>
        <begin position="1"/>
        <end position="152"/>
    </location>
</feature>
<feature type="domain" description="MGS-like" evidence="1">
    <location>
        <begin position="6"/>
        <end position="152"/>
    </location>
</feature>
<feature type="active site" description="Proton donor/acceptor" evidence="1">
    <location>
        <position position="71"/>
    </location>
</feature>
<feature type="binding site" evidence="1">
    <location>
        <position position="19"/>
    </location>
    <ligand>
        <name>substrate</name>
    </ligand>
</feature>
<feature type="binding site" evidence="1">
    <location>
        <position position="23"/>
    </location>
    <ligand>
        <name>substrate</name>
    </ligand>
</feature>
<feature type="binding site" evidence="1">
    <location>
        <begin position="45"/>
        <end position="48"/>
    </location>
    <ligand>
        <name>substrate</name>
    </ligand>
</feature>
<feature type="binding site" evidence="1">
    <location>
        <begin position="65"/>
        <end position="66"/>
    </location>
    <ligand>
        <name>substrate</name>
    </ligand>
</feature>
<feature type="binding site" evidence="1">
    <location>
        <position position="98"/>
    </location>
    <ligand>
        <name>substrate</name>
    </ligand>
</feature>
<gene>
    <name evidence="1" type="primary">mgsA</name>
    <name type="ordered locus">SARI_01934</name>
</gene>
<reference key="1">
    <citation type="submission" date="2007-11" db="EMBL/GenBank/DDBJ databases">
        <authorList>
            <consortium name="The Salmonella enterica serovar Arizonae Genome Sequencing Project"/>
            <person name="McClelland M."/>
            <person name="Sanderson E.K."/>
            <person name="Porwollik S."/>
            <person name="Spieth J."/>
            <person name="Clifton W.S."/>
            <person name="Fulton R."/>
            <person name="Chunyan W."/>
            <person name="Wollam A."/>
            <person name="Shah N."/>
            <person name="Pepin K."/>
            <person name="Bhonagiri V."/>
            <person name="Nash W."/>
            <person name="Johnson M."/>
            <person name="Thiruvilangam P."/>
            <person name="Wilson R."/>
        </authorList>
    </citation>
    <scope>NUCLEOTIDE SEQUENCE [LARGE SCALE GENOMIC DNA]</scope>
    <source>
        <strain>ATCC BAA-731 / CDC346-86 / RSK2980</strain>
    </source>
</reference>
<protein>
    <recommendedName>
        <fullName evidence="1">Methylglyoxal synthase</fullName>
        <shortName evidence="1">MGS</shortName>
        <ecNumber evidence="1">4.2.3.3</ecNumber>
    </recommendedName>
</protein>
<evidence type="ECO:0000255" key="1">
    <source>
        <dbReference type="HAMAP-Rule" id="MF_00549"/>
    </source>
</evidence>
<keyword id="KW-0456">Lyase</keyword>
<keyword id="KW-1185">Reference proteome</keyword>
<comment type="function">
    <text evidence="1">Catalyzes the formation of methylglyoxal from dihydroxyacetone phosphate.</text>
</comment>
<comment type="catalytic activity">
    <reaction evidence="1">
        <text>dihydroxyacetone phosphate = methylglyoxal + phosphate</text>
        <dbReference type="Rhea" id="RHEA:17937"/>
        <dbReference type="ChEBI" id="CHEBI:17158"/>
        <dbReference type="ChEBI" id="CHEBI:43474"/>
        <dbReference type="ChEBI" id="CHEBI:57642"/>
        <dbReference type="EC" id="4.2.3.3"/>
    </reaction>
</comment>
<comment type="similarity">
    <text evidence="1">Belongs to the methylglyoxal synthase family.</text>
</comment>
<accession>A9MHS6</accession>
<organism>
    <name type="scientific">Salmonella arizonae (strain ATCC BAA-731 / CDC346-86 / RSK2980)</name>
    <dbReference type="NCBI Taxonomy" id="41514"/>
    <lineage>
        <taxon>Bacteria</taxon>
        <taxon>Pseudomonadati</taxon>
        <taxon>Pseudomonadota</taxon>
        <taxon>Gammaproteobacteria</taxon>
        <taxon>Enterobacterales</taxon>
        <taxon>Enterobacteriaceae</taxon>
        <taxon>Salmonella</taxon>
    </lineage>
</organism>
<sequence length="152" mass="16991">MELTTRTLPTRKHIALVAHDHCKQMLMNWVERHQPLLEKHVLYATGTTGNLIQRATGMDVNAMLSGPMGGDQQVGALISEGKIDVLIFFWDPLNAVPHDPDVKALLRLATVWNIPVATNVSTADFIIQSPHFNDAVDILIPDYARYLAERLK</sequence>
<proteinExistence type="inferred from homology"/>
<name>MGSA_SALAR</name>